<protein>
    <recommendedName>
        <fullName evidence="1">Transcriptional repressor NrdR</fullName>
    </recommendedName>
</protein>
<dbReference type="EMBL" id="CP000408">
    <property type="protein sequence ID" value="ABP92900.1"/>
    <property type="molecule type" value="Genomic_DNA"/>
</dbReference>
<dbReference type="SMR" id="A4W3G1"/>
<dbReference type="KEGG" id="ssv:SSU98_1742"/>
<dbReference type="HOGENOM" id="CLU_108412_0_0_9"/>
<dbReference type="GO" id="GO:0005524">
    <property type="term" value="F:ATP binding"/>
    <property type="evidence" value="ECO:0007669"/>
    <property type="project" value="UniProtKB-KW"/>
</dbReference>
<dbReference type="GO" id="GO:0003677">
    <property type="term" value="F:DNA binding"/>
    <property type="evidence" value="ECO:0007669"/>
    <property type="project" value="UniProtKB-KW"/>
</dbReference>
<dbReference type="GO" id="GO:0008270">
    <property type="term" value="F:zinc ion binding"/>
    <property type="evidence" value="ECO:0007669"/>
    <property type="project" value="UniProtKB-UniRule"/>
</dbReference>
<dbReference type="GO" id="GO:0045892">
    <property type="term" value="P:negative regulation of DNA-templated transcription"/>
    <property type="evidence" value="ECO:0007669"/>
    <property type="project" value="UniProtKB-UniRule"/>
</dbReference>
<dbReference type="HAMAP" id="MF_00440">
    <property type="entry name" value="NrdR"/>
    <property type="match status" value="1"/>
</dbReference>
<dbReference type="InterPro" id="IPR005144">
    <property type="entry name" value="ATP-cone_dom"/>
</dbReference>
<dbReference type="InterPro" id="IPR055173">
    <property type="entry name" value="NrdR-like_N"/>
</dbReference>
<dbReference type="InterPro" id="IPR003796">
    <property type="entry name" value="RNR_NrdR-like"/>
</dbReference>
<dbReference type="NCBIfam" id="TIGR00244">
    <property type="entry name" value="transcriptional regulator NrdR"/>
    <property type="match status" value="1"/>
</dbReference>
<dbReference type="PANTHER" id="PTHR30455">
    <property type="entry name" value="TRANSCRIPTIONAL REPRESSOR NRDR"/>
    <property type="match status" value="1"/>
</dbReference>
<dbReference type="PANTHER" id="PTHR30455:SF2">
    <property type="entry name" value="TRANSCRIPTIONAL REPRESSOR NRDR"/>
    <property type="match status" value="1"/>
</dbReference>
<dbReference type="Pfam" id="PF03477">
    <property type="entry name" value="ATP-cone"/>
    <property type="match status" value="1"/>
</dbReference>
<dbReference type="Pfam" id="PF22811">
    <property type="entry name" value="Zn_ribbon_NrdR"/>
    <property type="match status" value="1"/>
</dbReference>
<dbReference type="PROSITE" id="PS51161">
    <property type="entry name" value="ATP_CONE"/>
    <property type="match status" value="1"/>
</dbReference>
<reference key="1">
    <citation type="journal article" date="2007" name="PLoS ONE">
        <title>A glimpse of streptococcal toxic shock syndrome from comparative genomics of S. suis 2 Chinese isolates.</title>
        <authorList>
            <person name="Chen C."/>
            <person name="Tang J."/>
            <person name="Dong W."/>
            <person name="Wang C."/>
            <person name="Feng Y."/>
            <person name="Wang J."/>
            <person name="Zheng F."/>
            <person name="Pan X."/>
            <person name="Liu D."/>
            <person name="Li M."/>
            <person name="Song Y."/>
            <person name="Zhu X."/>
            <person name="Sun H."/>
            <person name="Feng T."/>
            <person name="Guo Z."/>
            <person name="Ju A."/>
            <person name="Ge J."/>
            <person name="Dong Y."/>
            <person name="Sun W."/>
            <person name="Jiang Y."/>
            <person name="Wang J."/>
            <person name="Yan J."/>
            <person name="Yang H."/>
            <person name="Wang X."/>
            <person name="Gao G.F."/>
            <person name="Yang R."/>
            <person name="Wang J."/>
            <person name="Yu J."/>
        </authorList>
    </citation>
    <scope>NUCLEOTIDE SEQUENCE [LARGE SCALE GENOMIC DNA]</scope>
    <source>
        <strain>98HAH33</strain>
    </source>
</reference>
<name>NRDR_STRS2</name>
<gene>
    <name evidence="1" type="primary">nrdR</name>
    <name type="ordered locus">SSU98_1742</name>
</gene>
<proteinExistence type="inferred from homology"/>
<comment type="function">
    <text evidence="1">Negatively regulates transcription of bacterial ribonucleotide reductase nrd genes and operons by binding to NrdR-boxes.</text>
</comment>
<comment type="cofactor">
    <cofactor evidence="1">
        <name>Zn(2+)</name>
        <dbReference type="ChEBI" id="CHEBI:29105"/>
    </cofactor>
    <text evidence="1">Binds 1 zinc ion.</text>
</comment>
<comment type="similarity">
    <text evidence="1">Belongs to the NrdR family.</text>
</comment>
<accession>A4W3G1</accession>
<keyword id="KW-0067">ATP-binding</keyword>
<keyword id="KW-0238">DNA-binding</keyword>
<keyword id="KW-0479">Metal-binding</keyword>
<keyword id="KW-0547">Nucleotide-binding</keyword>
<keyword id="KW-0678">Repressor</keyword>
<keyword id="KW-0804">Transcription</keyword>
<keyword id="KW-0805">Transcription regulation</keyword>
<keyword id="KW-0862">Zinc</keyword>
<keyword id="KW-0863">Zinc-finger</keyword>
<organism>
    <name type="scientific">Streptococcus suis (strain 98HAH33)</name>
    <dbReference type="NCBI Taxonomy" id="391296"/>
    <lineage>
        <taxon>Bacteria</taxon>
        <taxon>Bacillati</taxon>
        <taxon>Bacillota</taxon>
        <taxon>Bacilli</taxon>
        <taxon>Lactobacillales</taxon>
        <taxon>Streptococcaceae</taxon>
        <taxon>Streptococcus</taxon>
    </lineage>
</organism>
<sequence>MRCPKCQSLKSSVIDSRQAEDGNTIRRRRSCDQCGQRFTTYERIEEKTLVVVKKDGTREQFSREKIFNGIIRSAQKRPVSTDDIDEVVNRIEQKVRAQGDSEIESDVIGNLVMEELVELDEITYVRFASVYRSFKDVGELENLLKQMISKGSKVKPGKKDETK</sequence>
<evidence type="ECO:0000255" key="1">
    <source>
        <dbReference type="HAMAP-Rule" id="MF_00440"/>
    </source>
</evidence>
<evidence type="ECO:0000256" key="2">
    <source>
        <dbReference type="SAM" id="MobiDB-lite"/>
    </source>
</evidence>
<feature type="chain" id="PRO_1000080845" description="Transcriptional repressor NrdR">
    <location>
        <begin position="1"/>
        <end position="163"/>
    </location>
</feature>
<feature type="domain" description="ATP-cone" evidence="1">
    <location>
        <begin position="49"/>
        <end position="139"/>
    </location>
</feature>
<feature type="zinc finger region" evidence="1">
    <location>
        <begin position="3"/>
        <end position="34"/>
    </location>
</feature>
<feature type="region of interest" description="Disordered" evidence="2">
    <location>
        <begin position="1"/>
        <end position="22"/>
    </location>
</feature>